<proteinExistence type="evidence at transcript level"/>
<keyword id="KW-0007">Acetylation</keyword>
<keyword id="KW-0560">Oxidoreductase</keyword>
<keyword id="KW-0597">Phosphoprotein</keyword>
<keyword id="KW-1185">Reference proteome</keyword>
<reference key="1">
    <citation type="submission" date="2004-11" db="EMBL/GenBank/DDBJ databases">
        <authorList>
            <consortium name="The German cDNA consortium"/>
        </authorList>
    </citation>
    <scope>NUCLEOTIDE SEQUENCE [LARGE SCALE MRNA]</scope>
    <source>
        <tissue>Kidney</tissue>
    </source>
</reference>
<accession>Q5R5C9</accession>
<evidence type="ECO:0000250" key="1">
    <source>
        <dbReference type="UniProtKB" id="Q8NBX0"/>
    </source>
</evidence>
<evidence type="ECO:0000305" key="2"/>
<protein>
    <recommendedName>
        <fullName>Saccharopine dehydrogenase-like oxidoreductase</fullName>
        <ecNumber>1.-.-.-</ecNumber>
    </recommendedName>
</protein>
<sequence length="429" mass="47104">MATEQRPFHLVVFGASGFTGQFVTEEVAREQVDPERSSRLPWAVAGRSREKLQRVLEKAALKLGRPTLSSEVGIIICDIANPASLDEMAKQATVVPNCVGPYRFYGEPVIKACIENGASCIDISGEPQFLELMQLKYHEKAADKGVYIIGSSGFDSIPADLGVIYTRNKMNGTLTAVESFLTIHSGPEGLSIHDGTWKSAIYGFGDQSNLRKLRNASNLKPVPLVGPKLKRRWPISYCRELKGYSIPFMGSDVSVVRRTQRYLYENLEESPVQYAAYATVGGITSVIKLMFAGLFFLFFVRFGIGRQLLIKFPWFFSFGYFSKQGPTQKQIDAASFTLTFFGQGYSQGIGTDKNKPNIKICTQVKGPEAGYVATPIAMVQAAMTLLNDASHLPKAGGVFTPGAAFSKTKLIDRLNKHGIEFSVISSSEV</sequence>
<gene>
    <name type="primary">SCCPDH</name>
</gene>
<comment type="similarity">
    <text evidence="2">Belongs to the saccharopine dehydrogenase family.</text>
</comment>
<organism>
    <name type="scientific">Pongo abelii</name>
    <name type="common">Sumatran orangutan</name>
    <name type="synonym">Pongo pygmaeus abelii</name>
    <dbReference type="NCBI Taxonomy" id="9601"/>
    <lineage>
        <taxon>Eukaryota</taxon>
        <taxon>Metazoa</taxon>
        <taxon>Chordata</taxon>
        <taxon>Craniata</taxon>
        <taxon>Vertebrata</taxon>
        <taxon>Euteleostomi</taxon>
        <taxon>Mammalia</taxon>
        <taxon>Eutheria</taxon>
        <taxon>Euarchontoglires</taxon>
        <taxon>Primates</taxon>
        <taxon>Haplorrhini</taxon>
        <taxon>Catarrhini</taxon>
        <taxon>Hominidae</taxon>
        <taxon>Pongo</taxon>
    </lineage>
</organism>
<name>SCPDL_PONAB</name>
<feature type="initiator methionine" description="Removed" evidence="1">
    <location>
        <position position="1"/>
    </location>
</feature>
<feature type="chain" id="PRO_0000212842" description="Saccharopine dehydrogenase-like oxidoreductase">
    <location>
        <begin position="2"/>
        <end position="429"/>
    </location>
</feature>
<feature type="modified residue" description="N-acetylalanine" evidence="1">
    <location>
        <position position="2"/>
    </location>
</feature>
<feature type="modified residue" description="Phosphoserine" evidence="1">
    <location>
        <position position="217"/>
    </location>
</feature>
<dbReference type="EC" id="1.-.-.-"/>
<dbReference type="EMBL" id="CR860933">
    <property type="protein sequence ID" value="CAH93037.1"/>
    <property type="molecule type" value="mRNA"/>
</dbReference>
<dbReference type="RefSeq" id="NP_001126796.1">
    <property type="nucleotide sequence ID" value="NM_001133324.1"/>
</dbReference>
<dbReference type="SMR" id="Q5R5C9"/>
<dbReference type="FunCoup" id="Q5R5C9">
    <property type="interactions" value="740"/>
</dbReference>
<dbReference type="GeneID" id="100173800"/>
<dbReference type="KEGG" id="pon:100173800"/>
<dbReference type="CTD" id="51097"/>
<dbReference type="eggNOG" id="KOG2733">
    <property type="taxonomic scope" value="Eukaryota"/>
</dbReference>
<dbReference type="InParanoid" id="Q5R5C9"/>
<dbReference type="OrthoDB" id="10268090at2759"/>
<dbReference type="Proteomes" id="UP000001595">
    <property type="component" value="Unplaced"/>
</dbReference>
<dbReference type="GO" id="GO:0005811">
    <property type="term" value="C:lipid droplet"/>
    <property type="evidence" value="ECO:0007669"/>
    <property type="project" value="TreeGrafter"/>
</dbReference>
<dbReference type="GO" id="GO:0005739">
    <property type="term" value="C:mitochondrion"/>
    <property type="evidence" value="ECO:0007669"/>
    <property type="project" value="TreeGrafter"/>
</dbReference>
<dbReference type="GO" id="GO:0005886">
    <property type="term" value="C:plasma membrane"/>
    <property type="evidence" value="ECO:0007669"/>
    <property type="project" value="TreeGrafter"/>
</dbReference>
<dbReference type="GO" id="GO:0016491">
    <property type="term" value="F:oxidoreductase activity"/>
    <property type="evidence" value="ECO:0007669"/>
    <property type="project" value="UniProtKB-KW"/>
</dbReference>
<dbReference type="GO" id="GO:0009247">
    <property type="term" value="P:glycolipid biosynthetic process"/>
    <property type="evidence" value="ECO:0007669"/>
    <property type="project" value="TreeGrafter"/>
</dbReference>
<dbReference type="FunFam" id="3.40.50.720:FF:000178">
    <property type="entry name" value="Saccharopine dehydrogenase-like oxidoreductase"/>
    <property type="match status" value="1"/>
</dbReference>
<dbReference type="Gene3D" id="3.40.50.720">
    <property type="entry name" value="NAD(P)-binding Rossmann-like Domain"/>
    <property type="match status" value="1"/>
</dbReference>
<dbReference type="InterPro" id="IPR036291">
    <property type="entry name" value="NAD(P)-bd_dom_sf"/>
</dbReference>
<dbReference type="InterPro" id="IPR051276">
    <property type="entry name" value="Saccharopine_DH-like_oxidrdct"/>
</dbReference>
<dbReference type="InterPro" id="IPR005097">
    <property type="entry name" value="Sacchrp_dh_NADP-bd"/>
</dbReference>
<dbReference type="PANTHER" id="PTHR12286">
    <property type="entry name" value="SACCHAROPINE DEHYDROGENASE-LIKE OXIDOREDUCTASE"/>
    <property type="match status" value="1"/>
</dbReference>
<dbReference type="PANTHER" id="PTHR12286:SF5">
    <property type="entry name" value="SACCHAROPINE DEHYDROGENASE-LIKE OXIDOREDUCTASE"/>
    <property type="match status" value="1"/>
</dbReference>
<dbReference type="Pfam" id="PF03435">
    <property type="entry name" value="Sacchrp_dh_NADP"/>
    <property type="match status" value="1"/>
</dbReference>
<dbReference type="SUPFAM" id="SSF51735">
    <property type="entry name" value="NAD(P)-binding Rossmann-fold domains"/>
    <property type="match status" value="1"/>
</dbReference>